<gene>
    <name evidence="2" type="primary">YTHDF2</name>
    <name evidence="6" type="ORF">QnpA-16856</name>
</gene>
<keyword id="KW-0007">Acetylation</keyword>
<keyword id="KW-0131">Cell cycle</keyword>
<keyword id="KW-0132">Cell division</keyword>
<keyword id="KW-0963">Cytoplasm</keyword>
<keyword id="KW-0221">Differentiation</keyword>
<keyword id="KW-0391">Immunity</keyword>
<keyword id="KW-0399">Innate immunity</keyword>
<keyword id="KW-0498">Mitosis</keyword>
<keyword id="KW-0539">Nucleus</keyword>
<keyword id="KW-0896">Oogenesis</keyword>
<keyword id="KW-0597">Phosphoprotein</keyword>
<keyword id="KW-1185">Reference proteome</keyword>
<keyword id="KW-0694">RNA-binding</keyword>
<keyword id="KW-0744">Spermatogenesis</keyword>
<keyword id="KW-0832">Ubl conjugation</keyword>
<reference key="1">
    <citation type="submission" date="2005-06" db="EMBL/GenBank/DDBJ databases">
        <title>DNA sequences of macaque genes expressed in brain or testis and its evolutionary implications.</title>
        <authorList>
            <consortium name="International consortium for macaque cDNA sequencing and analysis"/>
        </authorList>
    </citation>
    <scope>NUCLEOTIDE SEQUENCE [LARGE SCALE MRNA]</scope>
    <source>
        <tissue>Parietal cortex</tissue>
    </source>
</reference>
<name>YTHD2_MACFA</name>
<organism>
    <name type="scientific">Macaca fascicularis</name>
    <name type="common">Crab-eating macaque</name>
    <name type="synonym">Cynomolgus monkey</name>
    <dbReference type="NCBI Taxonomy" id="9541"/>
    <lineage>
        <taxon>Eukaryota</taxon>
        <taxon>Metazoa</taxon>
        <taxon>Chordata</taxon>
        <taxon>Craniata</taxon>
        <taxon>Vertebrata</taxon>
        <taxon>Euteleostomi</taxon>
        <taxon>Mammalia</taxon>
        <taxon>Eutheria</taxon>
        <taxon>Euarchontoglires</taxon>
        <taxon>Primates</taxon>
        <taxon>Haplorrhini</taxon>
        <taxon>Catarrhini</taxon>
        <taxon>Cercopithecidae</taxon>
        <taxon>Cercopithecinae</taxon>
        <taxon>Macaca</taxon>
    </lineage>
</organism>
<feature type="initiator methionine" description="Removed" evidence="3">
    <location>
        <position position="1"/>
    </location>
</feature>
<feature type="chain" id="PRO_0000249339" description="YTH domain-containing family protein 2">
    <location>
        <begin position="2"/>
        <end position="579"/>
    </location>
</feature>
<feature type="domain" description="YTH" evidence="4">
    <location>
        <begin position="410"/>
        <end position="544"/>
    </location>
</feature>
<feature type="region of interest" description="Disordered" evidence="5">
    <location>
        <begin position="1"/>
        <end position="45"/>
    </location>
</feature>
<feature type="region of interest" description="Localization to mRNA processing bodies (P-bodies)" evidence="3">
    <location>
        <begin position="2"/>
        <end position="384"/>
    </location>
</feature>
<feature type="region of interest" description="Disordered" evidence="5">
    <location>
        <begin position="247"/>
        <end position="387"/>
    </location>
</feature>
<feature type="region of interest" description="Interaction with m6A-containing mRNAs" evidence="3">
    <location>
        <begin position="385"/>
        <end position="579"/>
    </location>
</feature>
<feature type="compositionally biased region" description="Polar residues" evidence="5">
    <location>
        <begin position="291"/>
        <end position="316"/>
    </location>
</feature>
<feature type="compositionally biased region" description="Low complexity" evidence="5">
    <location>
        <begin position="337"/>
        <end position="349"/>
    </location>
</feature>
<feature type="compositionally biased region" description="Gly residues" evidence="5">
    <location>
        <begin position="359"/>
        <end position="371"/>
    </location>
</feature>
<feature type="compositionally biased region" description="Polar residues" evidence="5">
    <location>
        <begin position="372"/>
        <end position="383"/>
    </location>
</feature>
<feature type="binding site" evidence="3">
    <location>
        <begin position="416"/>
        <end position="418"/>
    </location>
    <ligand>
        <name>RNA</name>
        <dbReference type="ChEBI" id="CHEBI:33697"/>
    </ligand>
    <ligandPart>
        <name>N(6)-methyladenosine 5'-phosphate residue</name>
        <dbReference type="ChEBI" id="CHEBI:74449"/>
    </ligandPart>
</feature>
<feature type="binding site" evidence="3">
    <location>
        <position position="422"/>
    </location>
    <ligand>
        <name>RNA</name>
        <dbReference type="ChEBI" id="CHEBI:33697"/>
    </ligand>
    <ligandPart>
        <name>N(6)-methyladenosine 5'-phosphate residue</name>
        <dbReference type="ChEBI" id="CHEBI:74449"/>
    </ligandPart>
</feature>
<feature type="binding site" evidence="3">
    <location>
        <begin position="432"/>
        <end position="433"/>
    </location>
    <ligand>
        <name>RNA</name>
        <dbReference type="ChEBI" id="CHEBI:33697"/>
    </ligand>
    <ligandPart>
        <name>N(6)-methyladenosine 5'-phosphate residue</name>
        <dbReference type="ChEBI" id="CHEBI:74449"/>
    </ligandPart>
</feature>
<feature type="binding site" evidence="3">
    <location>
        <position position="462"/>
    </location>
    <ligand>
        <name>RNA</name>
        <dbReference type="ChEBI" id="CHEBI:33697"/>
    </ligand>
    <ligandPart>
        <name>N(6)-methyladenosine 5'-phosphate residue</name>
        <dbReference type="ChEBI" id="CHEBI:74449"/>
    </ligandPart>
</feature>
<feature type="binding site" evidence="3">
    <location>
        <position position="486"/>
    </location>
    <ligand>
        <name>RNA</name>
        <dbReference type="ChEBI" id="CHEBI:33697"/>
    </ligand>
    <ligandPart>
        <name>N(6)-methyladenosine 5'-phosphate residue</name>
        <dbReference type="ChEBI" id="CHEBI:74449"/>
    </ligandPart>
</feature>
<feature type="binding site" evidence="3">
    <location>
        <position position="491"/>
    </location>
    <ligand>
        <name>RNA</name>
        <dbReference type="ChEBI" id="CHEBI:33697"/>
    </ligand>
    <ligandPart>
        <name>N(6)-methyladenosine 5'-phosphate residue</name>
        <dbReference type="ChEBI" id="CHEBI:74449"/>
    </ligandPart>
</feature>
<feature type="modified residue" description="N-acetylserine" evidence="3">
    <location>
        <position position="2"/>
    </location>
</feature>
<feature type="modified residue" description="Phosphoserine" evidence="3">
    <location>
        <position position="2"/>
    </location>
</feature>
<feature type="modified residue" description="Phosphoserine" evidence="3">
    <location>
        <position position="4"/>
    </location>
</feature>
<feature type="modified residue" description="Phosphoserine" evidence="3">
    <location>
        <position position="5"/>
    </location>
</feature>
<feature type="modified residue" description="Phosphoserine" evidence="1">
    <location>
        <position position="22"/>
    </location>
</feature>
<feature type="modified residue" description="Phosphoserine" evidence="3">
    <location>
        <position position="39"/>
    </location>
</feature>
<feature type="modified residue" description="Phosphoserine" evidence="3">
    <location>
        <position position="196"/>
    </location>
</feature>
<feature type="modified residue" description="Phosphoserine" evidence="3">
    <location>
        <position position="359"/>
    </location>
</feature>
<feature type="modified residue" description="Phosphoserine" evidence="3">
    <location>
        <position position="394"/>
    </location>
</feature>
<evidence type="ECO:0000250" key="1">
    <source>
        <dbReference type="UniProtKB" id="Q7Z739"/>
    </source>
</evidence>
<evidence type="ECO:0000250" key="2">
    <source>
        <dbReference type="UniProtKB" id="Q91YT7"/>
    </source>
</evidence>
<evidence type="ECO:0000250" key="3">
    <source>
        <dbReference type="UniProtKB" id="Q9Y5A9"/>
    </source>
</evidence>
<evidence type="ECO:0000255" key="4">
    <source>
        <dbReference type="PROSITE-ProRule" id="PRU00225"/>
    </source>
</evidence>
<evidence type="ECO:0000256" key="5">
    <source>
        <dbReference type="SAM" id="MobiDB-lite"/>
    </source>
</evidence>
<evidence type="ECO:0000303" key="6">
    <source ref="1"/>
</evidence>
<evidence type="ECO:0000305" key="7"/>
<protein>
    <recommendedName>
        <fullName evidence="7">YTH domain-containing family protein 2</fullName>
    </recommendedName>
</protein>
<dbReference type="EMBL" id="AB169605">
    <property type="protein sequence ID" value="BAE01686.1"/>
    <property type="molecule type" value="mRNA"/>
</dbReference>
<dbReference type="SMR" id="Q4R5D9"/>
<dbReference type="STRING" id="9541.ENSMFAP00000012893"/>
<dbReference type="Proteomes" id="UP000233100">
    <property type="component" value="Unplaced"/>
</dbReference>
<dbReference type="GO" id="GO:0005737">
    <property type="term" value="C:cytoplasm"/>
    <property type="evidence" value="ECO:0000250"/>
    <property type="project" value="UniProtKB"/>
</dbReference>
<dbReference type="GO" id="GO:0010494">
    <property type="term" value="C:cytoplasmic stress granule"/>
    <property type="evidence" value="ECO:0000250"/>
    <property type="project" value="UniProtKB"/>
</dbReference>
<dbReference type="GO" id="GO:0005829">
    <property type="term" value="C:cytosol"/>
    <property type="evidence" value="ECO:0000250"/>
    <property type="project" value="UniProtKB"/>
</dbReference>
<dbReference type="GO" id="GO:0005634">
    <property type="term" value="C:nucleus"/>
    <property type="evidence" value="ECO:0000250"/>
    <property type="project" value="UniProtKB"/>
</dbReference>
<dbReference type="GO" id="GO:0000932">
    <property type="term" value="C:P-body"/>
    <property type="evidence" value="ECO:0000250"/>
    <property type="project" value="UniProtKB"/>
</dbReference>
<dbReference type="GO" id="GO:0062153">
    <property type="term" value="F:C5-methylcytidine-containing RNA reader activity"/>
    <property type="evidence" value="ECO:0000250"/>
    <property type="project" value="UniProtKB"/>
</dbReference>
<dbReference type="GO" id="GO:0003729">
    <property type="term" value="F:mRNA binding"/>
    <property type="evidence" value="ECO:0007669"/>
    <property type="project" value="TreeGrafter"/>
</dbReference>
<dbReference type="GO" id="GO:1990247">
    <property type="term" value="F:N6-methyladenosine-containing RNA reader activity"/>
    <property type="evidence" value="ECO:0000250"/>
    <property type="project" value="UniProtKB"/>
</dbReference>
<dbReference type="GO" id="GO:0048598">
    <property type="term" value="P:embryonic morphogenesis"/>
    <property type="evidence" value="ECO:0000250"/>
    <property type="project" value="UniProtKB"/>
</dbReference>
<dbReference type="GO" id="GO:0098508">
    <property type="term" value="P:endothelial to hematopoietic transition"/>
    <property type="evidence" value="ECO:0000250"/>
    <property type="project" value="UniProtKB"/>
</dbReference>
<dbReference type="GO" id="GO:0007276">
    <property type="term" value="P:gamete generation"/>
    <property type="evidence" value="ECO:0000250"/>
    <property type="project" value="UniProtKB"/>
</dbReference>
<dbReference type="GO" id="GO:0071425">
    <property type="term" value="P:hematopoietic stem cell proliferation"/>
    <property type="evidence" value="ECO:0000250"/>
    <property type="project" value="UniProtKB"/>
</dbReference>
<dbReference type="GO" id="GO:0045087">
    <property type="term" value="P:innate immune response"/>
    <property type="evidence" value="ECO:0007669"/>
    <property type="project" value="UniProtKB-KW"/>
</dbReference>
<dbReference type="GO" id="GO:0006402">
    <property type="term" value="P:mRNA catabolic process"/>
    <property type="evidence" value="ECO:0000250"/>
    <property type="project" value="UniProtKB"/>
</dbReference>
<dbReference type="GO" id="GO:0061157">
    <property type="term" value="P:mRNA destabilization"/>
    <property type="evidence" value="ECO:0000250"/>
    <property type="project" value="UniProtKB"/>
</dbReference>
<dbReference type="GO" id="GO:0045746">
    <property type="term" value="P:negative regulation of Notch signaling pathway"/>
    <property type="evidence" value="ECO:0000250"/>
    <property type="project" value="UniProtKB"/>
</dbReference>
<dbReference type="GO" id="GO:2000737">
    <property type="term" value="P:negative regulation of stem cell differentiation"/>
    <property type="evidence" value="ECO:0000250"/>
    <property type="project" value="UniProtKB"/>
</dbReference>
<dbReference type="GO" id="GO:0060339">
    <property type="term" value="P:negative regulation of type I interferon-mediated signaling pathway"/>
    <property type="evidence" value="ECO:0000250"/>
    <property type="project" value="UniProtKB"/>
</dbReference>
<dbReference type="GO" id="GO:0001556">
    <property type="term" value="P:oocyte maturation"/>
    <property type="evidence" value="ECO:0000250"/>
    <property type="project" value="UniProtKB"/>
</dbReference>
<dbReference type="GO" id="GO:0070925">
    <property type="term" value="P:organelle assembly"/>
    <property type="evidence" value="ECO:0000250"/>
    <property type="project" value="UniProtKB"/>
</dbReference>
<dbReference type="GO" id="GO:1903679">
    <property type="term" value="P:positive regulation of cap-independent translational initiation"/>
    <property type="evidence" value="ECO:0000250"/>
    <property type="project" value="UniProtKB"/>
</dbReference>
<dbReference type="GO" id="GO:0030155">
    <property type="term" value="P:regulation of cell adhesion"/>
    <property type="evidence" value="ECO:0000250"/>
    <property type="project" value="UniProtKB"/>
</dbReference>
<dbReference type="GO" id="GO:1902036">
    <property type="term" value="P:regulation of hematopoietic stem cell differentiation"/>
    <property type="evidence" value="ECO:0000250"/>
    <property type="project" value="UniProtKB"/>
</dbReference>
<dbReference type="GO" id="GO:1903538">
    <property type="term" value="P:regulation of meiotic cell cycle process involved in oocyte maturation"/>
    <property type="evidence" value="ECO:0000250"/>
    <property type="project" value="UniProtKB"/>
</dbReference>
<dbReference type="GO" id="GO:0043488">
    <property type="term" value="P:regulation of mRNA stability"/>
    <property type="evidence" value="ECO:0000250"/>
    <property type="project" value="UniProtKB"/>
</dbReference>
<dbReference type="GO" id="GO:0050767">
    <property type="term" value="P:regulation of neurogenesis"/>
    <property type="evidence" value="ECO:0000250"/>
    <property type="project" value="UniProtKB"/>
</dbReference>
<dbReference type="GO" id="GO:2000232">
    <property type="term" value="P:regulation of rRNA processing"/>
    <property type="evidence" value="ECO:0000250"/>
    <property type="project" value="UniProtKB"/>
</dbReference>
<dbReference type="GO" id="GO:0007284">
    <property type="term" value="P:spermatogonial cell division"/>
    <property type="evidence" value="ECO:0000250"/>
    <property type="project" value="UniProtKB"/>
</dbReference>
<dbReference type="GO" id="GO:0034063">
    <property type="term" value="P:stress granule assembly"/>
    <property type="evidence" value="ECO:0000250"/>
    <property type="project" value="UniProtKB"/>
</dbReference>
<dbReference type="CDD" id="cd21134">
    <property type="entry name" value="YTH"/>
    <property type="match status" value="1"/>
</dbReference>
<dbReference type="FunFam" id="3.10.590.10:FF:000001">
    <property type="entry name" value="YTH domain family 1, isoform CRA_a"/>
    <property type="match status" value="1"/>
</dbReference>
<dbReference type="Gene3D" id="3.10.590.10">
    <property type="entry name" value="ph1033 like domains"/>
    <property type="match status" value="1"/>
</dbReference>
<dbReference type="InterPro" id="IPR007275">
    <property type="entry name" value="YTH_domain"/>
</dbReference>
<dbReference type="InterPro" id="IPR045168">
    <property type="entry name" value="YTH_prot"/>
</dbReference>
<dbReference type="PANTHER" id="PTHR12357:SF8">
    <property type="entry name" value="YTH DOMAIN-CONTAINING FAMILY PROTEIN 2"/>
    <property type="match status" value="1"/>
</dbReference>
<dbReference type="PANTHER" id="PTHR12357">
    <property type="entry name" value="YTH YT521-B HOMOLOGY DOMAIN-CONTAINING"/>
    <property type="match status" value="1"/>
</dbReference>
<dbReference type="Pfam" id="PF04146">
    <property type="entry name" value="YTH"/>
    <property type="match status" value="1"/>
</dbReference>
<dbReference type="PROSITE" id="PS50882">
    <property type="entry name" value="YTH"/>
    <property type="match status" value="1"/>
</dbReference>
<sequence>MSASSLLEQRPKGQGNKVQNGSVHQKDGLNDDDFEPYLSPQARPNNAYTAMSDSYLPSYYSPSIGFSYSLGEAAWSTGGDTAMPYLTSYGQLSNGEPHFLPDAMFGQPGALGSTPFLGQHGFNFFPSGIDFSAWGNNSSQGQSTQSSGYSSNYAYAPSSLGGAMIDGQSAFANETLNKAPGMNTIDQGMAALKLGSTEVASNVPKVVGSAVGSGSITSNIVASNSLPPATIAPPKPASWADIASKPAKQQPKLKTKNGIAGSSLPPPPIKHNMDIGTWDNKGPVAKAPSQALVQNIGQPTQGSPQHVGQQANNSPPVAQASVGQQTQPLPPPPPQPAQLSVQQQAAQPTRWVAPRNRGSGFGHNGVDGNGVGQSQAGSGSTPSEPHPVLEKLRSINNYNPKDFDWNLKHGRVFIIKSYSEDDIHRSIKYNIWCSTEHGNKRLDAAYRSMNGKGPVYLLFSVNGSGHFCGVAEMKSAVDYNTCAGVWSQDKWKGRFDVRWIFVKDVPNSQLRHIRLENNENKPVTNSRDTQEVPLEKAKQVLKIIASYKHTTSIFDDFSHYEKRQEEEESVKKERQGRGK</sequence>
<proteinExistence type="evidence at transcript level"/>
<accession>Q4R5D9</accession>
<comment type="function">
    <text evidence="2 3">Specifically recognizes and binds N6-methyladenosine (m6A)-containing RNAs, and regulates their stability. M6A is a modification present at internal sites of mRNAs and some non-coding RNAs and plays a role in mRNA stability and processing. Acts as a regulator of mRNA stability by promoting degradation of m6A-containing mRNAs via interaction with the CCR4-NOT and ribonuclease P/MRP complexes, depending on the context. The YTHDF paralogs (YTHDF1, YTHDF2 and YTHDF3) share m6A-containing mRNAs targets and act redundantly to mediate mRNA degradation and cellular differentiation. M6A-containing mRNAs containing a binding site for RIDA/HRSP12 (5'-GGUUC-3') are preferentially degraded by endoribonucleolytic cleavage: cooperative binding of RIDA/HRSP12 and YTHDF2 to transcripts leads to recruitment of the ribonuclease P/MRP complex. Other m6A-containing mRNAs undergo deadenylation via direct interaction between YTHDF2 and CNOT1, leading to recruitment of the CCR4-NOT and subsequent deadenylation of m6A-containing mRNAs (By similarity). Required maternally to regulate oocyte maturation: probably acts by binding to m6A-containing mRNAs, thereby regulating maternal transcript dosage during oocyte maturation, which is essential for the competence of oocytes to sustain early zygotic development. Also required during spermatogenesis: regulates spermagonial adhesion by promoting degradation of m6A-containing transcripts coding for matrix metallopeptidases (By similarity). Also involved in hematopoietic stem cells specification by binding to m6A-containing mRNAs, leading to promote their degradation (By similarity). Also acts as a regulator of neural development by promoting m6A-dependent degradation of neural development-related mRNA targets (By similarity). Inhibits neural specification of induced pluripotent stem cells by binding to methylated neural-specific mRNAs and promoting their degradation, thereby restraining neural differentiation. Regulates circadian regulation of hepatic lipid metabolism: acts by promoting m6A-dependent degradation of PPARA transcripts. Regulates the innate immune response to infection by inhibiting the type I interferon response: acts by binding to m6A-containing IFNB transcripts and promoting their degradation. May also act as a promoter of cap-independent mRNA translation following heat shock stress: upon stress, relocalizes to the nucleus and specifically binds mRNAs with some m6A methylation mark at their 5'-UTR, protecting demethylation of mRNAs by FTO, thereby promoting cap-independent mRNA translation. Regulates mitotic entry by promoting the phase-specific m6A-dependent degradation of WEE1 transcripts. Promotes formation of phase-separated membraneless compartments, such as P-bodies or stress granules, by undergoing liquid-liquid phase separation upon binding to mRNAs containing multiple m6A-modified residues: polymethylated mRNAs act as a multivalent scaffold for the binding of YTHDF proteins, juxtaposing their disordered regions and thereby leading to phase separation. The resulting mRNA-YTHDF complexes then partition into different endogenous phase-separated membraneless compartments, such as P-bodies, stress granules or neuronal RNA granules. May also recognize and bind RNAs modified by C5-methylcytosine (m5C) and act as a regulator of rRNA processing (By similarity).</text>
</comment>
<comment type="subunit">
    <text evidence="3">Interacts with CNOT1; interaction is direct and promotes recruitment of the CCR4-NOT complex. Interacts with YTHDF3. Interacts with RIDA/HRSP12; interaction leads to recruitment of the ribonuclease P/MRP complex.</text>
</comment>
<comment type="subcellular location">
    <subcellularLocation>
        <location evidence="3">Cytoplasm</location>
        <location evidence="3">Cytosol</location>
    </subcellularLocation>
    <subcellularLocation>
        <location evidence="3">Cytoplasm</location>
        <location evidence="3">P-body</location>
    </subcellularLocation>
    <subcellularLocation>
        <location evidence="3">Cytoplasm</location>
        <location evidence="3">Stress granule</location>
    </subcellularLocation>
    <subcellularLocation>
        <location evidence="3">Nucleus</location>
    </subcellularLocation>
    <text evidence="3">Localizes to the cytosol and relocates to the nucleus following heat shock stress. Can partition into different structures: into P-bodies in unstressed cells, and into stress granules during stress.</text>
</comment>
<comment type="domain">
    <text evidence="3">The disordered regions have the ability to interact with each other and to 'phase separate' into liquid droplets within the cytosol following binding to mRNAs containing multiple m6A-modified residues. This leads to the partition of m6A-containing mRNAs into membraneless compartments, where mRNAs may be stored, degraded or used to transport mRNAs to dendritic arbors in neurons.</text>
</comment>
<comment type="PTM">
    <text evidence="3">Ubiquitinated by the SCF(SKP2) complex, leading to its degradation.</text>
</comment>
<comment type="similarity">
    <text evidence="7">Belongs to the YTHDF family. YTHDF2 subfamily.</text>
</comment>